<keyword id="KW-0131">Cell cycle</keyword>
<keyword id="KW-0132">Cell division</keyword>
<keyword id="KW-0133">Cell shape</keyword>
<keyword id="KW-0961">Cell wall biogenesis/degradation</keyword>
<keyword id="KW-0963">Cytoplasm</keyword>
<keyword id="KW-0274">FAD</keyword>
<keyword id="KW-0285">Flavoprotein</keyword>
<keyword id="KW-0521">NADP</keyword>
<keyword id="KW-0560">Oxidoreductase</keyword>
<keyword id="KW-0573">Peptidoglycan synthesis</keyword>
<keyword id="KW-1185">Reference proteome</keyword>
<reference key="1">
    <citation type="journal article" date="2000" name="Nature">
        <title>Genome sequence of the endocellular bacterial symbiont of aphids Buchnera sp. APS.</title>
        <authorList>
            <person name="Shigenobu S."/>
            <person name="Watanabe H."/>
            <person name="Hattori M."/>
            <person name="Sakaki Y."/>
            <person name="Ishikawa H."/>
        </authorList>
    </citation>
    <scope>NUCLEOTIDE SEQUENCE [LARGE SCALE GENOMIC DNA]</scope>
    <source>
        <strain>APS</strain>
    </source>
</reference>
<protein>
    <recommendedName>
        <fullName>UDP-N-acetylenolpyruvoylglucosamine reductase</fullName>
        <ecNumber>1.3.1.98</ecNumber>
    </recommendedName>
    <alternativeName>
        <fullName>UDP-N-acetylmuramate dehydrogenase</fullName>
    </alternativeName>
</protein>
<gene>
    <name type="primary">murB</name>
    <name type="ordered locus">BU045</name>
</gene>
<sequence length="356" mass="40593">MHKKKYFSSQSLKDLNTFAIDVTAKKIIFVKTIQSLIDISKICQLSNIPYIILGEGSNVLFLENYVGVVIINRIKGIKIVEKKNFWLLHVFSGEKWHNLVKLTLNLGILGLENLALIPGCIGSAAIQNIGAYGLEFKDVCQYVDILSLKDNTIKRIYKNSCKFSYRNSIFKDQYKNEHAVIRVGIKLSKKWRPILFSSLENYITPINITAYKIFNIICKIRKKKLPDPKKIGNAGSFFKNPLIKKKKAQKLINLYKVPNYPQKNGLVKISAAWLIENYKFKHLQIGDAAIHKKQKLILINKKNATAQEIIKLAKIIHKCILKKFNILLEPEVDLIGASGKIKASKIFKLNSKLKVI</sequence>
<organism>
    <name type="scientific">Buchnera aphidicola subsp. Acyrthosiphon pisum (strain APS)</name>
    <name type="common">Acyrthosiphon pisum symbiotic bacterium</name>
    <dbReference type="NCBI Taxonomy" id="107806"/>
    <lineage>
        <taxon>Bacteria</taxon>
        <taxon>Pseudomonadati</taxon>
        <taxon>Pseudomonadota</taxon>
        <taxon>Gammaproteobacteria</taxon>
        <taxon>Enterobacterales</taxon>
        <taxon>Erwiniaceae</taxon>
        <taxon>Buchnera</taxon>
    </lineage>
</organism>
<proteinExistence type="inferred from homology"/>
<accession>P57153</accession>
<dbReference type="EC" id="1.3.1.98"/>
<dbReference type="EMBL" id="BA000003">
    <property type="protein sequence ID" value="BAB12768.1"/>
    <property type="molecule type" value="Genomic_DNA"/>
</dbReference>
<dbReference type="RefSeq" id="NP_239882.1">
    <property type="nucleotide sequence ID" value="NC_002528.1"/>
</dbReference>
<dbReference type="RefSeq" id="WP_010895915.1">
    <property type="nucleotide sequence ID" value="NC_002528.1"/>
</dbReference>
<dbReference type="SMR" id="P57153"/>
<dbReference type="STRING" id="563178.BUAP5A_044"/>
<dbReference type="EnsemblBacteria" id="BAB12768">
    <property type="protein sequence ID" value="BAB12768"/>
    <property type="gene ID" value="BAB12768"/>
</dbReference>
<dbReference type="KEGG" id="buc:BU045"/>
<dbReference type="PATRIC" id="fig|107806.10.peg.54"/>
<dbReference type="eggNOG" id="COG0812">
    <property type="taxonomic scope" value="Bacteria"/>
</dbReference>
<dbReference type="HOGENOM" id="CLU_035304_0_0_6"/>
<dbReference type="UniPathway" id="UPA00219"/>
<dbReference type="Proteomes" id="UP000001806">
    <property type="component" value="Chromosome"/>
</dbReference>
<dbReference type="GO" id="GO:0005829">
    <property type="term" value="C:cytosol"/>
    <property type="evidence" value="ECO:0007669"/>
    <property type="project" value="TreeGrafter"/>
</dbReference>
<dbReference type="GO" id="GO:0071949">
    <property type="term" value="F:FAD binding"/>
    <property type="evidence" value="ECO:0007669"/>
    <property type="project" value="InterPro"/>
</dbReference>
<dbReference type="GO" id="GO:0008762">
    <property type="term" value="F:UDP-N-acetylmuramate dehydrogenase activity"/>
    <property type="evidence" value="ECO:0007669"/>
    <property type="project" value="UniProtKB-UniRule"/>
</dbReference>
<dbReference type="GO" id="GO:0051301">
    <property type="term" value="P:cell division"/>
    <property type="evidence" value="ECO:0007669"/>
    <property type="project" value="UniProtKB-KW"/>
</dbReference>
<dbReference type="GO" id="GO:0071555">
    <property type="term" value="P:cell wall organization"/>
    <property type="evidence" value="ECO:0007669"/>
    <property type="project" value="UniProtKB-KW"/>
</dbReference>
<dbReference type="GO" id="GO:0009252">
    <property type="term" value="P:peptidoglycan biosynthetic process"/>
    <property type="evidence" value="ECO:0007669"/>
    <property type="project" value="UniProtKB-UniRule"/>
</dbReference>
<dbReference type="GO" id="GO:0008360">
    <property type="term" value="P:regulation of cell shape"/>
    <property type="evidence" value="ECO:0007669"/>
    <property type="project" value="UniProtKB-KW"/>
</dbReference>
<dbReference type="Gene3D" id="3.30.465.10">
    <property type="match status" value="1"/>
</dbReference>
<dbReference type="Gene3D" id="3.90.78.10">
    <property type="entry name" value="UDP-N-acetylenolpyruvoylglucosamine reductase, C-terminal domain"/>
    <property type="match status" value="1"/>
</dbReference>
<dbReference type="Gene3D" id="3.30.43.10">
    <property type="entry name" value="Uridine Diphospho-n-acetylenolpyruvylglucosamine Reductase, domain 2"/>
    <property type="match status" value="1"/>
</dbReference>
<dbReference type="HAMAP" id="MF_00037">
    <property type="entry name" value="MurB"/>
    <property type="match status" value="1"/>
</dbReference>
<dbReference type="InterPro" id="IPR016166">
    <property type="entry name" value="FAD-bd_PCMH"/>
</dbReference>
<dbReference type="InterPro" id="IPR036318">
    <property type="entry name" value="FAD-bd_PCMH-like_sf"/>
</dbReference>
<dbReference type="InterPro" id="IPR016167">
    <property type="entry name" value="FAD-bd_PCMH_sub1"/>
</dbReference>
<dbReference type="InterPro" id="IPR016169">
    <property type="entry name" value="FAD-bd_PCMH_sub2"/>
</dbReference>
<dbReference type="InterPro" id="IPR003170">
    <property type="entry name" value="MurB"/>
</dbReference>
<dbReference type="InterPro" id="IPR011601">
    <property type="entry name" value="MurB_C"/>
</dbReference>
<dbReference type="InterPro" id="IPR036635">
    <property type="entry name" value="MurB_C_sf"/>
</dbReference>
<dbReference type="InterPro" id="IPR006094">
    <property type="entry name" value="Oxid_FAD_bind_N"/>
</dbReference>
<dbReference type="NCBIfam" id="TIGR00179">
    <property type="entry name" value="murB"/>
    <property type="match status" value="1"/>
</dbReference>
<dbReference type="NCBIfam" id="NF000755">
    <property type="entry name" value="PRK00046.1"/>
    <property type="match status" value="1"/>
</dbReference>
<dbReference type="PANTHER" id="PTHR21071">
    <property type="entry name" value="UDP-N-ACETYLENOLPYRUVOYLGLUCOSAMINE REDUCTASE"/>
    <property type="match status" value="1"/>
</dbReference>
<dbReference type="PANTHER" id="PTHR21071:SF4">
    <property type="entry name" value="UDP-N-ACETYLENOLPYRUVOYLGLUCOSAMINE REDUCTASE"/>
    <property type="match status" value="1"/>
</dbReference>
<dbReference type="Pfam" id="PF01565">
    <property type="entry name" value="FAD_binding_4"/>
    <property type="match status" value="1"/>
</dbReference>
<dbReference type="Pfam" id="PF02873">
    <property type="entry name" value="MurB_C"/>
    <property type="match status" value="1"/>
</dbReference>
<dbReference type="SUPFAM" id="SSF56176">
    <property type="entry name" value="FAD-binding/transporter-associated domain-like"/>
    <property type="match status" value="1"/>
</dbReference>
<dbReference type="SUPFAM" id="SSF56194">
    <property type="entry name" value="Uridine diphospho-N-Acetylenolpyruvylglucosamine reductase, MurB, C-terminal domain"/>
    <property type="match status" value="1"/>
</dbReference>
<dbReference type="PROSITE" id="PS51387">
    <property type="entry name" value="FAD_PCMH"/>
    <property type="match status" value="1"/>
</dbReference>
<name>MURB_BUCAI</name>
<evidence type="ECO:0000250" key="1"/>
<evidence type="ECO:0000305" key="2"/>
<feature type="chain" id="PRO_0000179187" description="UDP-N-acetylenolpyruvoylglucosamine reductase">
    <location>
        <begin position="1"/>
        <end position="356"/>
    </location>
</feature>
<feature type="domain" description="FAD-binding PCMH-type">
    <location>
        <begin position="20"/>
        <end position="190"/>
    </location>
</feature>
<feature type="active site" evidence="1">
    <location>
        <position position="166"/>
    </location>
</feature>
<feature type="active site" description="Proton donor" evidence="1">
    <location>
        <position position="236"/>
    </location>
</feature>
<feature type="active site" evidence="1">
    <location>
        <position position="331"/>
    </location>
</feature>
<comment type="function">
    <text evidence="1">Cell wall formation.</text>
</comment>
<comment type="catalytic activity">
    <reaction>
        <text>UDP-N-acetyl-alpha-D-muramate + NADP(+) = UDP-N-acetyl-3-O-(1-carboxyvinyl)-alpha-D-glucosamine + NADPH + H(+)</text>
        <dbReference type="Rhea" id="RHEA:12248"/>
        <dbReference type="ChEBI" id="CHEBI:15378"/>
        <dbReference type="ChEBI" id="CHEBI:57783"/>
        <dbReference type="ChEBI" id="CHEBI:58349"/>
        <dbReference type="ChEBI" id="CHEBI:68483"/>
        <dbReference type="ChEBI" id="CHEBI:70757"/>
        <dbReference type="EC" id="1.3.1.98"/>
    </reaction>
</comment>
<comment type="cofactor">
    <cofactor evidence="1">
        <name>FAD</name>
        <dbReference type="ChEBI" id="CHEBI:57692"/>
    </cofactor>
</comment>
<comment type="pathway">
    <text>Cell wall biogenesis; peptidoglycan biosynthesis.</text>
</comment>
<comment type="subcellular location">
    <subcellularLocation>
        <location evidence="1">Cytoplasm</location>
    </subcellularLocation>
</comment>
<comment type="similarity">
    <text evidence="2">Belongs to the MurB family.</text>
</comment>